<keyword id="KW-0997">Cell inner membrane</keyword>
<keyword id="KW-1003">Cell membrane</keyword>
<keyword id="KW-0201">Cytochrome c-type biogenesis</keyword>
<keyword id="KW-0349">Heme</keyword>
<keyword id="KW-0408">Iron</keyword>
<keyword id="KW-0472">Membrane</keyword>
<keyword id="KW-0479">Metal-binding</keyword>
<keyword id="KW-1185">Reference proteome</keyword>
<keyword id="KW-0735">Signal-anchor</keyword>
<keyword id="KW-0812">Transmembrane</keyword>
<keyword id="KW-1133">Transmembrane helix</keyword>
<gene>
    <name evidence="1" type="primary">ccmE</name>
    <name evidence="1" type="synonym">cycJ</name>
    <name type="ordered locus">Sden_3573</name>
</gene>
<evidence type="ECO:0000255" key="1">
    <source>
        <dbReference type="HAMAP-Rule" id="MF_01959"/>
    </source>
</evidence>
<reference key="1">
    <citation type="submission" date="2006-03" db="EMBL/GenBank/DDBJ databases">
        <title>Complete sequence of Shewanella denitrificans OS217.</title>
        <authorList>
            <consortium name="US DOE Joint Genome Institute"/>
            <person name="Copeland A."/>
            <person name="Lucas S."/>
            <person name="Lapidus A."/>
            <person name="Barry K."/>
            <person name="Detter J.C."/>
            <person name="Glavina del Rio T."/>
            <person name="Hammon N."/>
            <person name="Israni S."/>
            <person name="Dalin E."/>
            <person name="Tice H."/>
            <person name="Pitluck S."/>
            <person name="Brettin T."/>
            <person name="Bruce D."/>
            <person name="Han C."/>
            <person name="Tapia R."/>
            <person name="Gilna P."/>
            <person name="Kiss H."/>
            <person name="Schmutz J."/>
            <person name="Larimer F."/>
            <person name="Land M."/>
            <person name="Hauser L."/>
            <person name="Kyrpides N."/>
            <person name="Lykidis A."/>
            <person name="Richardson P."/>
        </authorList>
    </citation>
    <scope>NUCLEOTIDE SEQUENCE [LARGE SCALE GENOMIC DNA]</scope>
    <source>
        <strain>OS217 / ATCC BAA-1090 / DSM 15013</strain>
    </source>
</reference>
<organism>
    <name type="scientific">Shewanella denitrificans (strain OS217 / ATCC BAA-1090 / DSM 15013)</name>
    <dbReference type="NCBI Taxonomy" id="318161"/>
    <lineage>
        <taxon>Bacteria</taxon>
        <taxon>Pseudomonadati</taxon>
        <taxon>Pseudomonadota</taxon>
        <taxon>Gammaproteobacteria</taxon>
        <taxon>Alteromonadales</taxon>
        <taxon>Shewanellaceae</taxon>
        <taxon>Shewanella</taxon>
    </lineage>
</organism>
<accession>Q12I78</accession>
<protein>
    <recommendedName>
        <fullName evidence="1">Cytochrome c-type biogenesis protein CcmE</fullName>
    </recommendedName>
    <alternativeName>
        <fullName evidence="1">Cytochrome c maturation protein E</fullName>
    </alternativeName>
    <alternativeName>
        <fullName evidence="1">Heme chaperone CcmE</fullName>
    </alternativeName>
</protein>
<name>CCME_SHEDO</name>
<proteinExistence type="inferred from homology"/>
<comment type="function">
    <text evidence="1">Heme chaperone required for the biogenesis of c-type cytochromes. Transiently binds heme delivered by CcmC and transfers the heme to apo-cytochromes in a process facilitated by CcmF and CcmH.</text>
</comment>
<comment type="subcellular location">
    <subcellularLocation>
        <location evidence="1">Cell inner membrane</location>
        <topology evidence="1">Single-pass type II membrane protein</topology>
        <orientation evidence="1">Periplasmic side</orientation>
    </subcellularLocation>
</comment>
<comment type="similarity">
    <text evidence="1">Belongs to the CcmE/CycJ family.</text>
</comment>
<feature type="chain" id="PRO_1000070854" description="Cytochrome c-type biogenesis protein CcmE">
    <location>
        <begin position="1"/>
        <end position="163"/>
    </location>
</feature>
<feature type="topological domain" description="Cytoplasmic" evidence="1">
    <location>
        <begin position="1"/>
        <end position="8"/>
    </location>
</feature>
<feature type="transmembrane region" description="Helical; Signal-anchor for type II membrane protein" evidence="1">
    <location>
        <begin position="9"/>
        <end position="29"/>
    </location>
</feature>
<feature type="topological domain" description="Periplasmic" evidence="1">
    <location>
        <begin position="30"/>
        <end position="163"/>
    </location>
</feature>
<feature type="binding site" description="covalent" evidence="1">
    <location>
        <position position="131"/>
    </location>
    <ligand>
        <name>heme</name>
        <dbReference type="ChEBI" id="CHEBI:30413"/>
    </ligand>
</feature>
<feature type="binding site" description="axial binding residue" evidence="1">
    <location>
        <position position="135"/>
    </location>
    <ligand>
        <name>heme</name>
        <dbReference type="ChEBI" id="CHEBI:30413"/>
    </ligand>
    <ligandPart>
        <name>Fe</name>
        <dbReference type="ChEBI" id="CHEBI:18248"/>
    </ligandPart>
</feature>
<dbReference type="EMBL" id="CP000302">
    <property type="protein sequence ID" value="ABE56848.1"/>
    <property type="molecule type" value="Genomic_DNA"/>
</dbReference>
<dbReference type="RefSeq" id="WP_011497988.1">
    <property type="nucleotide sequence ID" value="NC_007954.1"/>
</dbReference>
<dbReference type="SMR" id="Q12I78"/>
<dbReference type="STRING" id="318161.Sden_3573"/>
<dbReference type="KEGG" id="sdn:Sden_3573"/>
<dbReference type="eggNOG" id="COG2332">
    <property type="taxonomic scope" value="Bacteria"/>
</dbReference>
<dbReference type="HOGENOM" id="CLU_079503_1_0_6"/>
<dbReference type="OrthoDB" id="9793584at2"/>
<dbReference type="Proteomes" id="UP000001982">
    <property type="component" value="Chromosome"/>
</dbReference>
<dbReference type="GO" id="GO:0005886">
    <property type="term" value="C:plasma membrane"/>
    <property type="evidence" value="ECO:0007669"/>
    <property type="project" value="UniProtKB-SubCell"/>
</dbReference>
<dbReference type="GO" id="GO:0020037">
    <property type="term" value="F:heme binding"/>
    <property type="evidence" value="ECO:0007669"/>
    <property type="project" value="InterPro"/>
</dbReference>
<dbReference type="GO" id="GO:0046872">
    <property type="term" value="F:metal ion binding"/>
    <property type="evidence" value="ECO:0007669"/>
    <property type="project" value="UniProtKB-KW"/>
</dbReference>
<dbReference type="GO" id="GO:0017004">
    <property type="term" value="P:cytochrome complex assembly"/>
    <property type="evidence" value="ECO:0007669"/>
    <property type="project" value="UniProtKB-KW"/>
</dbReference>
<dbReference type="FunFam" id="2.40.50.140:FF:000104">
    <property type="entry name" value="Cytochrome c-type biogenesis protein CcmE"/>
    <property type="match status" value="1"/>
</dbReference>
<dbReference type="Gene3D" id="2.40.50.140">
    <property type="entry name" value="Nucleic acid-binding proteins"/>
    <property type="match status" value="1"/>
</dbReference>
<dbReference type="HAMAP" id="MF_01959">
    <property type="entry name" value="CcmE"/>
    <property type="match status" value="1"/>
</dbReference>
<dbReference type="InterPro" id="IPR004329">
    <property type="entry name" value="CcmE"/>
</dbReference>
<dbReference type="InterPro" id="IPR036127">
    <property type="entry name" value="CcmE-like_sf"/>
</dbReference>
<dbReference type="InterPro" id="IPR012340">
    <property type="entry name" value="NA-bd_OB-fold"/>
</dbReference>
<dbReference type="NCBIfam" id="NF009638">
    <property type="entry name" value="PRK13165.1"/>
    <property type="match status" value="1"/>
</dbReference>
<dbReference type="NCBIfam" id="NF009729">
    <property type="entry name" value="PRK13254.1-3"/>
    <property type="match status" value="1"/>
</dbReference>
<dbReference type="PANTHER" id="PTHR34128">
    <property type="entry name" value="CYTOCHROME C-TYPE BIOGENESIS PROTEIN CCME HOMOLOG, MITOCHONDRIAL"/>
    <property type="match status" value="1"/>
</dbReference>
<dbReference type="PANTHER" id="PTHR34128:SF2">
    <property type="entry name" value="CYTOCHROME C-TYPE BIOGENESIS PROTEIN CCME HOMOLOG, MITOCHONDRIAL"/>
    <property type="match status" value="1"/>
</dbReference>
<dbReference type="Pfam" id="PF03100">
    <property type="entry name" value="CcmE"/>
    <property type="match status" value="1"/>
</dbReference>
<dbReference type="SUPFAM" id="SSF82093">
    <property type="entry name" value="Heme chaperone CcmE"/>
    <property type="match status" value="1"/>
</dbReference>
<sequence length="163" mass="17867">MNPRRKKRLTLAVALIVGVAGAASLLLYALNSNLNLFYTPNEIINGKNDTGIKPEIGQRIRIGGMVTMGSMVRDPDSLHVEFAVHDSTGTQVIVTYDDLLPDLFREGQGIVAQGVLTDSGKLEATEVLAKHDENYMPPEVAEAMGKQHKKLEYQEGVEKTAQY</sequence>